<comment type="similarity">
    <text evidence="1">Belongs to the universal ribosomal protein uL30 family.</text>
</comment>
<organism>
    <name type="scientific">Candida glabrata (strain ATCC 2001 / BCRC 20586 / JCM 3761 / NBRC 0622 / NRRL Y-65 / CBS 138)</name>
    <name type="common">Yeast</name>
    <name type="synonym">Nakaseomyces glabratus</name>
    <dbReference type="NCBI Taxonomy" id="284593"/>
    <lineage>
        <taxon>Eukaryota</taxon>
        <taxon>Fungi</taxon>
        <taxon>Dikarya</taxon>
        <taxon>Ascomycota</taxon>
        <taxon>Saccharomycotina</taxon>
        <taxon>Saccharomycetes</taxon>
        <taxon>Saccharomycetales</taxon>
        <taxon>Saccharomycetaceae</taxon>
        <taxon>Nakaseomyces</taxon>
    </lineage>
</organism>
<sequence length="244" mass="27572">MAAEKILKPESQLKKAKYDEKKSEEFLKARAARRVANKQKRAAILERNAAHQKEYEAAERAVIDAKREAKASGSYYVEAQPKLVFVVRIKGINKIPPKPRKVLQLLRLTQINSGTFVKVTKATSELLKLIEPYVAYGYPSYSTVRQLVYKRGHGKINKQRIALSDNAIVEANLGKFGILSIDDLIHEIVTVGPHFKQANNFLWPFKLSNPSGGWGVPRKFKHFIQGGAFGNREQFINKLVKAMN</sequence>
<reference key="1">
    <citation type="journal article" date="2004" name="Nature">
        <title>Genome evolution in yeasts.</title>
        <authorList>
            <person name="Dujon B."/>
            <person name="Sherman D."/>
            <person name="Fischer G."/>
            <person name="Durrens P."/>
            <person name="Casaregola S."/>
            <person name="Lafontaine I."/>
            <person name="de Montigny J."/>
            <person name="Marck C."/>
            <person name="Neuveglise C."/>
            <person name="Talla E."/>
            <person name="Goffard N."/>
            <person name="Frangeul L."/>
            <person name="Aigle M."/>
            <person name="Anthouard V."/>
            <person name="Babour A."/>
            <person name="Barbe V."/>
            <person name="Barnay S."/>
            <person name="Blanchin S."/>
            <person name="Beckerich J.-M."/>
            <person name="Beyne E."/>
            <person name="Bleykasten C."/>
            <person name="Boisrame A."/>
            <person name="Boyer J."/>
            <person name="Cattolico L."/>
            <person name="Confanioleri F."/>
            <person name="de Daruvar A."/>
            <person name="Despons L."/>
            <person name="Fabre E."/>
            <person name="Fairhead C."/>
            <person name="Ferry-Dumazet H."/>
            <person name="Groppi A."/>
            <person name="Hantraye F."/>
            <person name="Hennequin C."/>
            <person name="Jauniaux N."/>
            <person name="Joyet P."/>
            <person name="Kachouri R."/>
            <person name="Kerrest A."/>
            <person name="Koszul R."/>
            <person name="Lemaire M."/>
            <person name="Lesur I."/>
            <person name="Ma L."/>
            <person name="Muller H."/>
            <person name="Nicaud J.-M."/>
            <person name="Nikolski M."/>
            <person name="Oztas S."/>
            <person name="Ozier-Kalogeropoulos O."/>
            <person name="Pellenz S."/>
            <person name="Potier S."/>
            <person name="Richard G.-F."/>
            <person name="Straub M.-L."/>
            <person name="Suleau A."/>
            <person name="Swennen D."/>
            <person name="Tekaia F."/>
            <person name="Wesolowski-Louvel M."/>
            <person name="Westhof E."/>
            <person name="Wirth B."/>
            <person name="Zeniou-Meyer M."/>
            <person name="Zivanovic Y."/>
            <person name="Bolotin-Fukuhara M."/>
            <person name="Thierry A."/>
            <person name="Bouchier C."/>
            <person name="Caudron B."/>
            <person name="Scarpelli C."/>
            <person name="Gaillardin C."/>
            <person name="Weissenbach J."/>
            <person name="Wincker P."/>
            <person name="Souciet J.-L."/>
        </authorList>
    </citation>
    <scope>NUCLEOTIDE SEQUENCE [LARGE SCALE GENOMIC DNA]</scope>
    <source>
        <strain>ATCC 2001 / BCRC 20586 / JCM 3761 / NBRC 0622 / NRRL Y-65 / CBS 138</strain>
    </source>
</reference>
<evidence type="ECO:0000305" key="1"/>
<accession>Q6FSN6</accession>
<dbReference type="EMBL" id="CR380953">
    <property type="protein sequence ID" value="CAG59685.1"/>
    <property type="molecule type" value="Genomic_DNA"/>
</dbReference>
<dbReference type="RefSeq" id="XP_446758.1">
    <property type="nucleotide sequence ID" value="XM_446758.1"/>
</dbReference>
<dbReference type="SMR" id="Q6FSN6"/>
<dbReference type="FunCoup" id="Q6FSN6">
    <property type="interactions" value="1550"/>
</dbReference>
<dbReference type="STRING" id="284593.Q6FSN6"/>
<dbReference type="EnsemblFungi" id="CAGL0G09130g-T">
    <property type="protein sequence ID" value="CAGL0G09130g-T-p1"/>
    <property type="gene ID" value="CAGL0G09130g"/>
</dbReference>
<dbReference type="KEGG" id="cgr:2888043"/>
<dbReference type="CGD" id="CAL0129750">
    <property type="gene designation" value="CAGL0G09130g"/>
</dbReference>
<dbReference type="VEuPathDB" id="FungiDB:B1J91_G09130g"/>
<dbReference type="VEuPathDB" id="FungiDB:CAGL0G09130g"/>
<dbReference type="eggNOG" id="KOG3184">
    <property type="taxonomic scope" value="Eukaryota"/>
</dbReference>
<dbReference type="HOGENOM" id="CLU_055156_0_0_1"/>
<dbReference type="InParanoid" id="Q6FSN6"/>
<dbReference type="Proteomes" id="UP000002428">
    <property type="component" value="Chromosome G"/>
</dbReference>
<dbReference type="GO" id="GO:0022625">
    <property type="term" value="C:cytosolic large ribosomal subunit"/>
    <property type="evidence" value="ECO:0007669"/>
    <property type="project" value="TreeGrafter"/>
</dbReference>
<dbReference type="GO" id="GO:0062040">
    <property type="term" value="C:fungal biofilm matrix"/>
    <property type="evidence" value="ECO:0000314"/>
    <property type="project" value="CGD"/>
</dbReference>
<dbReference type="GO" id="GO:0003723">
    <property type="term" value="F:RNA binding"/>
    <property type="evidence" value="ECO:0007669"/>
    <property type="project" value="InterPro"/>
</dbReference>
<dbReference type="GO" id="GO:0003735">
    <property type="term" value="F:structural constituent of ribosome"/>
    <property type="evidence" value="ECO:0007669"/>
    <property type="project" value="InterPro"/>
</dbReference>
<dbReference type="GO" id="GO:0000463">
    <property type="term" value="P:maturation of LSU-rRNA from tricistronic rRNA transcript (SSU-rRNA, 5.8S rRNA, LSU-rRNA)"/>
    <property type="evidence" value="ECO:0007669"/>
    <property type="project" value="InterPro"/>
</dbReference>
<dbReference type="CDD" id="cd01657">
    <property type="entry name" value="Ribosomal_L7_archeal_euk"/>
    <property type="match status" value="1"/>
</dbReference>
<dbReference type="FunFam" id="3.30.1390.20:FF:000002">
    <property type="entry name" value="60S ribosomal protein L7"/>
    <property type="match status" value="1"/>
</dbReference>
<dbReference type="FunFam" id="3.30.1390.20:FF:000003">
    <property type="entry name" value="60S ribosomal protein L7"/>
    <property type="match status" value="1"/>
</dbReference>
<dbReference type="Gene3D" id="3.30.1390.20">
    <property type="entry name" value="Ribosomal protein L30, ferredoxin-like fold domain"/>
    <property type="match status" value="2"/>
</dbReference>
<dbReference type="InterPro" id="IPR036919">
    <property type="entry name" value="Ribo_uL30_ferredoxin-like_sf"/>
</dbReference>
<dbReference type="InterPro" id="IPR039699">
    <property type="entry name" value="Ribosomal_uL30"/>
</dbReference>
<dbReference type="InterPro" id="IPR018038">
    <property type="entry name" value="Ribosomal_uL30_CS"/>
</dbReference>
<dbReference type="InterPro" id="IPR005998">
    <property type="entry name" value="Ribosomal_uL30_euk"/>
</dbReference>
<dbReference type="InterPro" id="IPR035808">
    <property type="entry name" value="Ribosomal_uL30_euk_arc"/>
</dbReference>
<dbReference type="InterPro" id="IPR016082">
    <property type="entry name" value="Ribosomal_uL30_ferredoxin-like"/>
</dbReference>
<dbReference type="InterPro" id="IPR012988">
    <property type="entry name" value="Ribosomal_uL30_N_euk"/>
</dbReference>
<dbReference type="NCBIfam" id="TIGR01310">
    <property type="entry name" value="uL30_euk"/>
    <property type="match status" value="1"/>
</dbReference>
<dbReference type="PANTHER" id="PTHR11524">
    <property type="entry name" value="60S RIBOSOMAL PROTEIN L7"/>
    <property type="match status" value="1"/>
</dbReference>
<dbReference type="PANTHER" id="PTHR11524:SF16">
    <property type="entry name" value="LARGE RIBOSOMAL SUBUNIT PROTEIN UL30"/>
    <property type="match status" value="1"/>
</dbReference>
<dbReference type="Pfam" id="PF00327">
    <property type="entry name" value="Ribosomal_L30"/>
    <property type="match status" value="1"/>
</dbReference>
<dbReference type="Pfam" id="PF08079">
    <property type="entry name" value="Ribosomal_L30_N"/>
    <property type="match status" value="1"/>
</dbReference>
<dbReference type="SUPFAM" id="SSF55129">
    <property type="entry name" value="Ribosomal protein L30p/L7e"/>
    <property type="match status" value="1"/>
</dbReference>
<dbReference type="PROSITE" id="PS00634">
    <property type="entry name" value="RIBOSOMAL_L30"/>
    <property type="match status" value="1"/>
</dbReference>
<keyword id="KW-1185">Reference proteome</keyword>
<keyword id="KW-0687">Ribonucleoprotein</keyword>
<keyword id="KW-0689">Ribosomal protein</keyword>
<protein>
    <recommendedName>
        <fullName evidence="1">Large ribosomal subunit protein uL30</fullName>
    </recommendedName>
    <alternativeName>
        <fullName>60S ribosomal protein L7</fullName>
    </alternativeName>
</protein>
<gene>
    <name type="primary">RPL7</name>
    <name type="ordered locus">CAGL0G09130g</name>
</gene>
<feature type="chain" id="PRO_0000104643" description="Large ribosomal subunit protein uL30">
    <location>
        <begin position="1"/>
        <end position="244"/>
    </location>
</feature>
<name>RL7_CANGA</name>
<proteinExistence type="inferred from homology"/>